<dbReference type="EMBL" id="AAFI02000172">
    <property type="protein sequence ID" value="EAL61971.1"/>
    <property type="molecule type" value="Genomic_DNA"/>
</dbReference>
<dbReference type="RefSeq" id="XP_635475.1">
    <property type="nucleotide sequence ID" value="XM_630383.1"/>
</dbReference>
<dbReference type="SMR" id="Q54FE7"/>
<dbReference type="PaxDb" id="44689-DDB0189147"/>
<dbReference type="EnsemblProtists" id="EAL61971">
    <property type="protein sequence ID" value="EAL61971"/>
    <property type="gene ID" value="DDB_G0290911"/>
</dbReference>
<dbReference type="GeneID" id="8627891"/>
<dbReference type="KEGG" id="ddi:DDB_G0290911"/>
<dbReference type="dictyBase" id="DDB_G0290911"/>
<dbReference type="HOGENOM" id="CLU_3145617_0_0_1"/>
<dbReference type="InParanoid" id="Q54FE7"/>
<dbReference type="PRO" id="PR:Q54FE7"/>
<dbReference type="Proteomes" id="UP000002195">
    <property type="component" value="Chromosome 5"/>
</dbReference>
<dbReference type="GO" id="GO:0016020">
    <property type="term" value="C:membrane"/>
    <property type="evidence" value="ECO:0007669"/>
    <property type="project" value="UniProtKB-SubCell"/>
</dbReference>
<feature type="chain" id="PRO_0000346900" description="Uncharacterized transmembrane protein DDB_G0290911">
    <location>
        <begin position="1"/>
        <end position="49"/>
    </location>
</feature>
<feature type="transmembrane region" description="Helical" evidence="1">
    <location>
        <begin position="20"/>
        <end position="42"/>
    </location>
</feature>
<organism>
    <name type="scientific">Dictyostelium discoideum</name>
    <name type="common">Social amoeba</name>
    <dbReference type="NCBI Taxonomy" id="44689"/>
    <lineage>
        <taxon>Eukaryota</taxon>
        <taxon>Amoebozoa</taxon>
        <taxon>Evosea</taxon>
        <taxon>Eumycetozoa</taxon>
        <taxon>Dictyostelia</taxon>
        <taxon>Dictyosteliales</taxon>
        <taxon>Dictyosteliaceae</taxon>
        <taxon>Dictyostelium</taxon>
    </lineage>
</organism>
<reference key="1">
    <citation type="journal article" date="2005" name="Nature">
        <title>The genome of the social amoeba Dictyostelium discoideum.</title>
        <authorList>
            <person name="Eichinger L."/>
            <person name="Pachebat J.A."/>
            <person name="Gloeckner G."/>
            <person name="Rajandream M.A."/>
            <person name="Sucgang R."/>
            <person name="Berriman M."/>
            <person name="Song J."/>
            <person name="Olsen R."/>
            <person name="Szafranski K."/>
            <person name="Xu Q."/>
            <person name="Tunggal B."/>
            <person name="Kummerfeld S."/>
            <person name="Madera M."/>
            <person name="Konfortov B.A."/>
            <person name="Rivero F."/>
            <person name="Bankier A.T."/>
            <person name="Lehmann R."/>
            <person name="Hamlin N."/>
            <person name="Davies R."/>
            <person name="Gaudet P."/>
            <person name="Fey P."/>
            <person name="Pilcher K."/>
            <person name="Chen G."/>
            <person name="Saunders D."/>
            <person name="Sodergren E.J."/>
            <person name="Davis P."/>
            <person name="Kerhornou A."/>
            <person name="Nie X."/>
            <person name="Hall N."/>
            <person name="Anjard C."/>
            <person name="Hemphill L."/>
            <person name="Bason N."/>
            <person name="Farbrother P."/>
            <person name="Desany B."/>
            <person name="Just E."/>
            <person name="Morio T."/>
            <person name="Rost R."/>
            <person name="Churcher C.M."/>
            <person name="Cooper J."/>
            <person name="Haydock S."/>
            <person name="van Driessche N."/>
            <person name="Cronin A."/>
            <person name="Goodhead I."/>
            <person name="Muzny D.M."/>
            <person name="Mourier T."/>
            <person name="Pain A."/>
            <person name="Lu M."/>
            <person name="Harper D."/>
            <person name="Lindsay R."/>
            <person name="Hauser H."/>
            <person name="James K.D."/>
            <person name="Quiles M."/>
            <person name="Madan Babu M."/>
            <person name="Saito T."/>
            <person name="Buchrieser C."/>
            <person name="Wardroper A."/>
            <person name="Felder M."/>
            <person name="Thangavelu M."/>
            <person name="Johnson D."/>
            <person name="Knights A."/>
            <person name="Loulseged H."/>
            <person name="Mungall K.L."/>
            <person name="Oliver K."/>
            <person name="Price C."/>
            <person name="Quail M.A."/>
            <person name="Urushihara H."/>
            <person name="Hernandez J."/>
            <person name="Rabbinowitsch E."/>
            <person name="Steffen D."/>
            <person name="Sanders M."/>
            <person name="Ma J."/>
            <person name="Kohara Y."/>
            <person name="Sharp S."/>
            <person name="Simmonds M.N."/>
            <person name="Spiegler S."/>
            <person name="Tivey A."/>
            <person name="Sugano S."/>
            <person name="White B."/>
            <person name="Walker D."/>
            <person name="Woodward J.R."/>
            <person name="Winckler T."/>
            <person name="Tanaka Y."/>
            <person name="Shaulsky G."/>
            <person name="Schleicher M."/>
            <person name="Weinstock G.M."/>
            <person name="Rosenthal A."/>
            <person name="Cox E.C."/>
            <person name="Chisholm R.L."/>
            <person name="Gibbs R.A."/>
            <person name="Loomis W.F."/>
            <person name="Platzer M."/>
            <person name="Kay R.R."/>
            <person name="Williams J.G."/>
            <person name="Dear P.H."/>
            <person name="Noegel A.A."/>
            <person name="Barrell B.G."/>
            <person name="Kuspa A."/>
        </authorList>
    </citation>
    <scope>NUCLEOTIDE SEQUENCE [LARGE SCALE GENOMIC DNA]</scope>
    <source>
        <strain>AX4</strain>
    </source>
</reference>
<keyword id="KW-0472">Membrane</keyword>
<keyword id="KW-1185">Reference proteome</keyword>
<keyword id="KW-0812">Transmembrane</keyword>
<keyword id="KW-1133">Transmembrane helix</keyword>
<name>Y9147_DICDI</name>
<gene>
    <name type="ORF">DDB_G0290911</name>
</gene>
<evidence type="ECO:0000255" key="1"/>
<evidence type="ECO:0000305" key="2"/>
<proteinExistence type="predicted"/>
<accession>Q54FE7</accession>
<protein>
    <recommendedName>
        <fullName>Uncharacterized transmembrane protein DDB_G0290911</fullName>
    </recommendedName>
</protein>
<sequence>MHQSQPQQQIEEYKQIKKLLFLVGLTIGKMATSRILSFLGFINCEIKLK</sequence>
<comment type="subcellular location">
    <subcellularLocation>
        <location evidence="2">Membrane</location>
        <topology evidence="2">Single-pass membrane protein</topology>
    </subcellularLocation>
</comment>